<organism>
    <name type="scientific">Xanthomonas campestris pv. campestris (strain 8004)</name>
    <dbReference type="NCBI Taxonomy" id="314565"/>
    <lineage>
        <taxon>Bacteria</taxon>
        <taxon>Pseudomonadati</taxon>
        <taxon>Pseudomonadota</taxon>
        <taxon>Gammaproteobacteria</taxon>
        <taxon>Lysobacterales</taxon>
        <taxon>Lysobacteraceae</taxon>
        <taxon>Xanthomonas</taxon>
    </lineage>
</organism>
<sequence length="187" mass="19896">MRLVLLGPPGSGKGTQAARLKDTFQIPHISTGDLLRAEVAAGSPLGLKAKEVMARGDLVSDEILLGMLEARLGQADVANGFILDGYPRNVAQANALDSLLSKIGQPLDAVVQLDVASELLVERIAGRAKAEGREDDNPESVRKRLQVYTDSTAPVIGFYEQRGKLARVDGVGSLDEVLERIGQALGR</sequence>
<protein>
    <recommendedName>
        <fullName evidence="1">Adenylate kinase</fullName>
        <shortName evidence="1">AK</shortName>
        <ecNumber evidence="1">2.7.4.3</ecNumber>
    </recommendedName>
    <alternativeName>
        <fullName evidence="1">ATP-AMP transphosphorylase</fullName>
    </alternativeName>
    <alternativeName>
        <fullName evidence="1">ATP:AMP phosphotransferase</fullName>
    </alternativeName>
    <alternativeName>
        <fullName evidence="1">Adenylate monophosphate kinase</fullName>
    </alternativeName>
</protein>
<feature type="chain" id="PRO_1000058937" description="Adenylate kinase">
    <location>
        <begin position="1"/>
        <end position="187"/>
    </location>
</feature>
<feature type="region of interest" description="NMP" evidence="1">
    <location>
        <begin position="30"/>
        <end position="59"/>
    </location>
</feature>
<feature type="region of interest" description="LID" evidence="1">
    <location>
        <begin position="126"/>
        <end position="136"/>
    </location>
</feature>
<feature type="binding site" evidence="1">
    <location>
        <begin position="10"/>
        <end position="15"/>
    </location>
    <ligand>
        <name>ATP</name>
        <dbReference type="ChEBI" id="CHEBI:30616"/>
    </ligand>
</feature>
<feature type="binding site" evidence="1">
    <location>
        <position position="31"/>
    </location>
    <ligand>
        <name>AMP</name>
        <dbReference type="ChEBI" id="CHEBI:456215"/>
    </ligand>
</feature>
<feature type="binding site" evidence="1">
    <location>
        <position position="36"/>
    </location>
    <ligand>
        <name>AMP</name>
        <dbReference type="ChEBI" id="CHEBI:456215"/>
    </ligand>
</feature>
<feature type="binding site" evidence="1">
    <location>
        <begin position="57"/>
        <end position="59"/>
    </location>
    <ligand>
        <name>AMP</name>
        <dbReference type="ChEBI" id="CHEBI:456215"/>
    </ligand>
</feature>
<feature type="binding site" evidence="1">
    <location>
        <begin position="85"/>
        <end position="88"/>
    </location>
    <ligand>
        <name>AMP</name>
        <dbReference type="ChEBI" id="CHEBI:456215"/>
    </ligand>
</feature>
<feature type="binding site" evidence="1">
    <location>
        <position position="92"/>
    </location>
    <ligand>
        <name>AMP</name>
        <dbReference type="ChEBI" id="CHEBI:456215"/>
    </ligand>
</feature>
<feature type="binding site" evidence="1">
    <location>
        <position position="127"/>
    </location>
    <ligand>
        <name>ATP</name>
        <dbReference type="ChEBI" id="CHEBI:30616"/>
    </ligand>
</feature>
<feature type="binding site" evidence="1">
    <location>
        <position position="133"/>
    </location>
    <ligand>
        <name>AMP</name>
        <dbReference type="ChEBI" id="CHEBI:456215"/>
    </ligand>
</feature>
<feature type="binding site" evidence="1">
    <location>
        <position position="144"/>
    </location>
    <ligand>
        <name>AMP</name>
        <dbReference type="ChEBI" id="CHEBI:456215"/>
    </ligand>
</feature>
<feature type="binding site" evidence="1">
    <location>
        <position position="172"/>
    </location>
    <ligand>
        <name>ATP</name>
        <dbReference type="ChEBI" id="CHEBI:30616"/>
    </ligand>
</feature>
<evidence type="ECO:0000255" key="1">
    <source>
        <dbReference type="HAMAP-Rule" id="MF_00235"/>
    </source>
</evidence>
<name>KAD_XANC8</name>
<keyword id="KW-0067">ATP-binding</keyword>
<keyword id="KW-0963">Cytoplasm</keyword>
<keyword id="KW-0418">Kinase</keyword>
<keyword id="KW-0545">Nucleotide biosynthesis</keyword>
<keyword id="KW-0547">Nucleotide-binding</keyword>
<keyword id="KW-0808">Transferase</keyword>
<comment type="function">
    <text evidence="1">Catalyzes the reversible transfer of the terminal phosphate group between ATP and AMP. Plays an important role in cellular energy homeostasis and in adenine nucleotide metabolism.</text>
</comment>
<comment type="catalytic activity">
    <reaction evidence="1">
        <text>AMP + ATP = 2 ADP</text>
        <dbReference type="Rhea" id="RHEA:12973"/>
        <dbReference type="ChEBI" id="CHEBI:30616"/>
        <dbReference type="ChEBI" id="CHEBI:456215"/>
        <dbReference type="ChEBI" id="CHEBI:456216"/>
        <dbReference type="EC" id="2.7.4.3"/>
    </reaction>
</comment>
<comment type="pathway">
    <text evidence="1">Purine metabolism; AMP biosynthesis via salvage pathway; AMP from ADP: step 1/1.</text>
</comment>
<comment type="subunit">
    <text evidence="1">Monomer.</text>
</comment>
<comment type="subcellular location">
    <subcellularLocation>
        <location evidence="1">Cytoplasm</location>
    </subcellularLocation>
</comment>
<comment type="domain">
    <text evidence="1">Consists of three domains, a large central CORE domain and two small peripheral domains, NMPbind and LID, which undergo movements during catalysis. The LID domain closes over the site of phosphoryl transfer upon ATP binding. Assembling and dissambling the active center during each catalytic cycle provides an effective means to prevent ATP hydrolysis.</text>
</comment>
<comment type="similarity">
    <text evidence="1">Belongs to the adenylate kinase family.</text>
</comment>
<accession>Q4UYC6</accession>
<gene>
    <name evidence="1" type="primary">adk</name>
    <name type="ordered locus">XC_0873</name>
</gene>
<reference key="1">
    <citation type="journal article" date="2005" name="Genome Res.">
        <title>Comparative and functional genomic analyses of the pathogenicity of phytopathogen Xanthomonas campestris pv. campestris.</title>
        <authorList>
            <person name="Qian W."/>
            <person name="Jia Y."/>
            <person name="Ren S.-X."/>
            <person name="He Y.-Q."/>
            <person name="Feng J.-X."/>
            <person name="Lu L.-F."/>
            <person name="Sun Q."/>
            <person name="Ying G."/>
            <person name="Tang D.-J."/>
            <person name="Tang H."/>
            <person name="Wu W."/>
            <person name="Hao P."/>
            <person name="Wang L."/>
            <person name="Jiang B.-L."/>
            <person name="Zeng S."/>
            <person name="Gu W.-Y."/>
            <person name="Lu G."/>
            <person name="Rong L."/>
            <person name="Tian Y."/>
            <person name="Yao Z."/>
            <person name="Fu G."/>
            <person name="Chen B."/>
            <person name="Fang R."/>
            <person name="Qiang B."/>
            <person name="Chen Z."/>
            <person name="Zhao G.-P."/>
            <person name="Tang J.-L."/>
            <person name="He C."/>
        </authorList>
    </citation>
    <scope>NUCLEOTIDE SEQUENCE [LARGE SCALE GENOMIC DNA]</scope>
    <source>
        <strain>8004</strain>
    </source>
</reference>
<proteinExistence type="inferred from homology"/>
<dbReference type="EC" id="2.7.4.3" evidence="1"/>
<dbReference type="EMBL" id="CP000050">
    <property type="protein sequence ID" value="AAY47947.1"/>
    <property type="molecule type" value="Genomic_DNA"/>
</dbReference>
<dbReference type="RefSeq" id="WP_011038393.1">
    <property type="nucleotide sequence ID" value="NZ_CP155948.1"/>
</dbReference>
<dbReference type="SMR" id="Q4UYC6"/>
<dbReference type="KEGG" id="xcb:XC_0873"/>
<dbReference type="HOGENOM" id="CLU_032354_4_1_6"/>
<dbReference type="UniPathway" id="UPA00588">
    <property type="reaction ID" value="UER00649"/>
</dbReference>
<dbReference type="Proteomes" id="UP000000420">
    <property type="component" value="Chromosome"/>
</dbReference>
<dbReference type="GO" id="GO:0005737">
    <property type="term" value="C:cytoplasm"/>
    <property type="evidence" value="ECO:0007669"/>
    <property type="project" value="UniProtKB-SubCell"/>
</dbReference>
<dbReference type="GO" id="GO:0004017">
    <property type="term" value="F:adenylate kinase activity"/>
    <property type="evidence" value="ECO:0007669"/>
    <property type="project" value="UniProtKB-UniRule"/>
</dbReference>
<dbReference type="GO" id="GO:0005524">
    <property type="term" value="F:ATP binding"/>
    <property type="evidence" value="ECO:0007669"/>
    <property type="project" value="UniProtKB-UniRule"/>
</dbReference>
<dbReference type="GO" id="GO:0044209">
    <property type="term" value="P:AMP salvage"/>
    <property type="evidence" value="ECO:0007669"/>
    <property type="project" value="UniProtKB-UniRule"/>
</dbReference>
<dbReference type="CDD" id="cd01428">
    <property type="entry name" value="ADK"/>
    <property type="match status" value="1"/>
</dbReference>
<dbReference type="Gene3D" id="3.40.50.300">
    <property type="entry name" value="P-loop containing nucleotide triphosphate hydrolases"/>
    <property type="match status" value="1"/>
</dbReference>
<dbReference type="HAMAP" id="MF_00235">
    <property type="entry name" value="Adenylate_kinase_Adk"/>
    <property type="match status" value="1"/>
</dbReference>
<dbReference type="InterPro" id="IPR006259">
    <property type="entry name" value="Adenyl_kin_sub"/>
</dbReference>
<dbReference type="InterPro" id="IPR000850">
    <property type="entry name" value="Adenylat/UMP-CMP_kin"/>
</dbReference>
<dbReference type="InterPro" id="IPR033690">
    <property type="entry name" value="Adenylat_kinase_CS"/>
</dbReference>
<dbReference type="InterPro" id="IPR027417">
    <property type="entry name" value="P-loop_NTPase"/>
</dbReference>
<dbReference type="NCBIfam" id="TIGR01351">
    <property type="entry name" value="adk"/>
    <property type="match status" value="1"/>
</dbReference>
<dbReference type="NCBIfam" id="NF001381">
    <property type="entry name" value="PRK00279.1-3"/>
    <property type="match status" value="1"/>
</dbReference>
<dbReference type="NCBIfam" id="NF011100">
    <property type="entry name" value="PRK14527.1"/>
    <property type="match status" value="1"/>
</dbReference>
<dbReference type="NCBIfam" id="NF011101">
    <property type="entry name" value="PRK14528.1"/>
    <property type="match status" value="1"/>
</dbReference>
<dbReference type="NCBIfam" id="NF011104">
    <property type="entry name" value="PRK14531.1"/>
    <property type="match status" value="1"/>
</dbReference>
<dbReference type="NCBIfam" id="NF011105">
    <property type="entry name" value="PRK14532.1"/>
    <property type="match status" value="1"/>
</dbReference>
<dbReference type="PANTHER" id="PTHR23359">
    <property type="entry name" value="NUCLEOTIDE KINASE"/>
    <property type="match status" value="1"/>
</dbReference>
<dbReference type="Pfam" id="PF00406">
    <property type="entry name" value="ADK"/>
    <property type="match status" value="1"/>
</dbReference>
<dbReference type="PRINTS" id="PR00094">
    <property type="entry name" value="ADENYLTKNASE"/>
</dbReference>
<dbReference type="SUPFAM" id="SSF52540">
    <property type="entry name" value="P-loop containing nucleoside triphosphate hydrolases"/>
    <property type="match status" value="1"/>
</dbReference>
<dbReference type="PROSITE" id="PS00113">
    <property type="entry name" value="ADENYLATE_KINASE"/>
    <property type="match status" value="1"/>
</dbReference>